<accession>Q9ESP7</accession>
<accession>Q9ESP6</accession>
<accession>Q9ESP8</accession>
<organism>
    <name type="scientific">Rattus norvegicus</name>
    <name type="common">Rat</name>
    <dbReference type="NCBI Taxonomy" id="10116"/>
    <lineage>
        <taxon>Eukaryota</taxon>
        <taxon>Metazoa</taxon>
        <taxon>Chordata</taxon>
        <taxon>Craniata</taxon>
        <taxon>Vertebrata</taxon>
        <taxon>Euteleostomi</taxon>
        <taxon>Mammalia</taxon>
        <taxon>Eutheria</taxon>
        <taxon>Euarchontoglires</taxon>
        <taxon>Glires</taxon>
        <taxon>Rodentia</taxon>
        <taxon>Myomorpha</taxon>
        <taxon>Muroidea</taxon>
        <taxon>Muridae</taxon>
        <taxon>Murinae</taxon>
        <taxon>Rattus</taxon>
    </lineage>
</organism>
<comment type="function">
    <text evidence="2">Cleaves aggrecan, a cartilage proteoglycan, at the '392-Glu-|-Ala-393' site and may be involved in its turnover. Also cleaves COMP. May play an important role in the destruction of aggrecan in arthritic diseases.</text>
</comment>
<comment type="catalytic activity">
    <reaction>
        <text>Glutamyl endopeptidase. Bonds cleaved include 370-Thr-Glu-Gly-Glu-|-Ala-Arg-Gly-Ser-377 in the interglobular domain of mammalian aggrecan.</text>
        <dbReference type="EC" id="3.4.24.82"/>
    </reaction>
</comment>
<comment type="cofactor">
    <cofactor evidence="2">
        <name>Zn(2+)</name>
        <dbReference type="ChEBI" id="CHEBI:29105"/>
    </cofactor>
    <text evidence="2">Binds 1 zinc ion per subunit.</text>
</comment>
<comment type="subunit">
    <text evidence="1">Interacts with SRPX2.</text>
</comment>
<comment type="subcellular location">
    <subcellularLocation>
        <location evidence="1">Secreted</location>
        <location evidence="1">Extracellular space</location>
        <location evidence="1">Extracellular matrix</location>
    </subcellularLocation>
</comment>
<comment type="tissue specificity">
    <text>Brain specific.</text>
</comment>
<comment type="domain">
    <text evidence="2">The spacer domain and the TSP type-1 domains are important for a tight interaction with the extracellular matrix. The spacer domain is also required for cleavage of COMP (By similarity).</text>
</comment>
<comment type="PTM">
    <text>The precursor is cleaved by a furin endopeptidase.</text>
</comment>
<comment type="PTM">
    <text evidence="1">Glycosylated. Can be O-fucosylated by POFUT2 on a serine or a threonine residue found within the consensus sequence C1-X(2)-(S/T)-C2-G of the TSP type-1 repeat domains where C1 and C2 are the first and second cysteine residue of the repeat, respectively. Fucosylated repeats can then be further glycosylated by the addition of a beta-1,3-glucose residue by the glucosyltransferase, B3GALTL. Fucosylation mediates the efficient secretion of ADAMTS family members. Can also be C-glycosylated with one or two mannose molecules on tryptophan residues within the consensus sequence W-X-X-W of the TPRs, and N-glycosylated. These other glycosylations can also facilitate secretion (By similarity).</text>
</comment>
<evidence type="ECO:0000250" key="1"/>
<evidence type="ECO:0000250" key="2">
    <source>
        <dbReference type="UniProtKB" id="O75173"/>
    </source>
</evidence>
<evidence type="ECO:0000255" key="3"/>
<evidence type="ECO:0000255" key="4">
    <source>
        <dbReference type="PROSITE-ProRule" id="PRU00210"/>
    </source>
</evidence>
<evidence type="ECO:0000255" key="5">
    <source>
        <dbReference type="PROSITE-ProRule" id="PRU00276"/>
    </source>
</evidence>
<evidence type="ECO:0000255" key="6">
    <source>
        <dbReference type="PROSITE-ProRule" id="PRU10095"/>
    </source>
</evidence>
<sequence length="630" mass="68385">RRTKRFASLSRFVETLVVADDKMAAFHGAGLKHYLLTVMAAAAKAFKHPSIRNPVNLVVTRLVILGSGQEVPQVGPSAAQTLRSFCTWQKGLNPPNDSDPDHFDTAILFTRQDLCGVSTCDALGMAGVGTVCDPARSCAIVEDDGLQSAFTAAHELGHVFNMLHDNSKPCANLNGQGSSSRHVMAPVMAHVDPEEPWSPCSARFITDFLDNGYGHCLLDKPEAPLHLPVTFPGKDYDADRQCQLTFGPDSSHCPQLPPPCAALWCFGHLNGHAMCQTKHSPWADGTPCGPAQACMGGRCLHVDQLKDFNIPQAGGWGPWGPWGDCSRTCGGGVQFSSRDCTKPVPRNGGKYCEGRRTPFRSCNTKNCPHGSALTFREEQCAAYNHRTDLFKSFPGPMDWVPRYTGVAPRDQCKLTCQARALGYYYVLEPRVADGTPCSPDSSSVCVQGRCIHAGCDRIIGSKKKFDKCMVCGGNGSSCSKQSGSFKKFRYGYSDVVTIPAGRTHILVRQQGGSGLKSIYLALKLADGSYALNGEYTLMPSSTDVVLPGAVSLRYSGRTAASETLSGHGPLAQPLTLQVLVAGNPQNVRLRYSFFVPRPVPSTPRPPPQNWLQRRAEILEILRKRTWAGRK</sequence>
<reference key="1">
    <citation type="journal article" date="2000" name="Neurosci. Lett.">
        <title>ADAMTS-4 (a disintegrin and metalloproteinase with thrombospondin motifs) is transcriptionally induced in beta-amyloid treated rat astrocytes.</title>
        <authorList>
            <person name="Satoh K."/>
            <person name="Suzuki N."/>
            <person name="Yokota H."/>
        </authorList>
    </citation>
    <scope>NUCLEOTIDE SEQUENCE [MRNA]</scope>
    <source>
        <strain>Wistar</strain>
        <tissue>Brain</tissue>
    </source>
</reference>
<name>ATS4_RAT</name>
<dbReference type="EC" id="3.4.24.82"/>
<dbReference type="EMBL" id="AB042272">
    <property type="protein sequence ID" value="BAB16474.1"/>
    <property type="molecule type" value="mRNA"/>
</dbReference>
<dbReference type="EMBL" id="AB042271">
    <property type="protein sequence ID" value="BAB16473.1"/>
    <property type="molecule type" value="mRNA"/>
</dbReference>
<dbReference type="EMBL" id="AB042273">
    <property type="protein sequence ID" value="BAB16475.1"/>
    <property type="molecule type" value="mRNA"/>
</dbReference>
<dbReference type="RefSeq" id="NP_076449.1">
    <property type="nucleotide sequence ID" value="NM_023959.1"/>
</dbReference>
<dbReference type="SMR" id="Q9ESP7"/>
<dbReference type="FunCoup" id="Q9ESP7">
    <property type="interactions" value="64"/>
</dbReference>
<dbReference type="STRING" id="10116.ENSRNOP00000004713"/>
<dbReference type="ChEMBL" id="CHEMBL4523453"/>
<dbReference type="MEROPS" id="M12.221"/>
<dbReference type="GlyCosmos" id="Q9ESP7">
    <property type="glycosylation" value="2 sites, No reported glycans"/>
</dbReference>
<dbReference type="GlyGen" id="Q9ESP7">
    <property type="glycosylation" value="2 sites"/>
</dbReference>
<dbReference type="PhosphoSitePlus" id="Q9ESP7"/>
<dbReference type="PaxDb" id="10116-ENSRNOP00000004713"/>
<dbReference type="GeneID" id="66015"/>
<dbReference type="KEGG" id="rno:66015"/>
<dbReference type="UCSC" id="RGD:621242">
    <property type="organism name" value="rat"/>
</dbReference>
<dbReference type="AGR" id="RGD:621242"/>
<dbReference type="CTD" id="9507"/>
<dbReference type="RGD" id="621242">
    <property type="gene designation" value="Adamts4"/>
</dbReference>
<dbReference type="eggNOG" id="KOG3538">
    <property type="taxonomic scope" value="Eukaryota"/>
</dbReference>
<dbReference type="InParanoid" id="Q9ESP7"/>
<dbReference type="OrthoDB" id="12257at9989"/>
<dbReference type="PhylomeDB" id="Q9ESP7"/>
<dbReference type="BRENDA" id="3.4.24.82">
    <property type="organism ID" value="5301"/>
</dbReference>
<dbReference type="Reactome" id="R-RNO-1474228">
    <property type="pathway name" value="Degradation of the extracellular matrix"/>
</dbReference>
<dbReference type="Reactome" id="R-RNO-5173214">
    <property type="pathway name" value="O-glycosylation of TSR domain-containing proteins"/>
</dbReference>
<dbReference type="Proteomes" id="UP000002494">
    <property type="component" value="Unplaced"/>
</dbReference>
<dbReference type="GO" id="GO:0031012">
    <property type="term" value="C:extracellular matrix"/>
    <property type="evidence" value="ECO:0000318"/>
    <property type="project" value="GO_Central"/>
</dbReference>
<dbReference type="GO" id="GO:0005615">
    <property type="term" value="C:extracellular space"/>
    <property type="evidence" value="ECO:0000266"/>
    <property type="project" value="RGD"/>
</dbReference>
<dbReference type="GO" id="GO:0004222">
    <property type="term" value="F:metalloendopeptidase activity"/>
    <property type="evidence" value="ECO:0000266"/>
    <property type="project" value="RGD"/>
</dbReference>
<dbReference type="GO" id="GO:0008237">
    <property type="term" value="F:metallopeptidase activity"/>
    <property type="evidence" value="ECO:0000250"/>
    <property type="project" value="UniProtKB"/>
</dbReference>
<dbReference type="GO" id="GO:0008233">
    <property type="term" value="F:peptidase activity"/>
    <property type="evidence" value="ECO:0000250"/>
    <property type="project" value="UniProtKB"/>
</dbReference>
<dbReference type="GO" id="GO:0002020">
    <property type="term" value="F:protease binding"/>
    <property type="evidence" value="ECO:0000266"/>
    <property type="project" value="RGD"/>
</dbReference>
<dbReference type="GO" id="GO:0008270">
    <property type="term" value="F:zinc ion binding"/>
    <property type="evidence" value="ECO:0000266"/>
    <property type="project" value="RGD"/>
</dbReference>
<dbReference type="GO" id="GO:0042742">
    <property type="term" value="P:defense response to bacterium"/>
    <property type="evidence" value="ECO:0000266"/>
    <property type="project" value="RGD"/>
</dbReference>
<dbReference type="GO" id="GO:0030198">
    <property type="term" value="P:extracellular matrix organization"/>
    <property type="evidence" value="ECO:0000318"/>
    <property type="project" value="GO_Central"/>
</dbReference>
<dbReference type="GO" id="GO:0006508">
    <property type="term" value="P:proteolysis"/>
    <property type="evidence" value="ECO:0000266"/>
    <property type="project" value="RGD"/>
</dbReference>
<dbReference type="CDD" id="cd04273">
    <property type="entry name" value="ZnMc_ADAMTS_like"/>
    <property type="match status" value="1"/>
</dbReference>
<dbReference type="FunFam" id="2.20.100.10:FF:000006">
    <property type="entry name" value="A disintegrin and metalloproteinase with thrombospondin motifs 1"/>
    <property type="match status" value="1"/>
</dbReference>
<dbReference type="FunFam" id="2.60.120.830:FF:000001">
    <property type="entry name" value="A disintegrin and metalloproteinase with thrombospondin motifs 1"/>
    <property type="match status" value="1"/>
</dbReference>
<dbReference type="FunFam" id="3.40.1620.60:FF:000003">
    <property type="entry name" value="A disintegrin and metalloproteinase with thrombospondin motifs 1"/>
    <property type="match status" value="1"/>
</dbReference>
<dbReference type="FunFam" id="3.40.390.10:FF:000001">
    <property type="entry name" value="A disintegrin and metalloproteinase with thrombospondin motifs 1"/>
    <property type="match status" value="1"/>
</dbReference>
<dbReference type="Gene3D" id="2.60.120.830">
    <property type="match status" value="1"/>
</dbReference>
<dbReference type="Gene3D" id="3.40.1620.60">
    <property type="match status" value="1"/>
</dbReference>
<dbReference type="Gene3D" id="3.40.390.10">
    <property type="entry name" value="Collagenase (Catalytic Domain)"/>
    <property type="match status" value="1"/>
</dbReference>
<dbReference type="Gene3D" id="2.20.100.10">
    <property type="entry name" value="Thrombospondin type-1 (TSP1) repeat"/>
    <property type="match status" value="1"/>
</dbReference>
<dbReference type="InterPro" id="IPR006586">
    <property type="entry name" value="ADAM_Cys-rich"/>
</dbReference>
<dbReference type="InterPro" id="IPR013273">
    <property type="entry name" value="ADAMTS/ADAMTS-like"/>
</dbReference>
<dbReference type="InterPro" id="IPR050439">
    <property type="entry name" value="ADAMTS_ADAMTS-like"/>
</dbReference>
<dbReference type="InterPro" id="IPR041645">
    <property type="entry name" value="ADAMTS_CR_2"/>
</dbReference>
<dbReference type="InterPro" id="IPR045371">
    <property type="entry name" value="ADAMTS_CR_3"/>
</dbReference>
<dbReference type="InterPro" id="IPR010294">
    <property type="entry name" value="ADAMTS_spacer1"/>
</dbReference>
<dbReference type="InterPro" id="IPR024079">
    <property type="entry name" value="MetalloPept_cat_dom_sf"/>
</dbReference>
<dbReference type="InterPro" id="IPR001590">
    <property type="entry name" value="Peptidase_M12B"/>
</dbReference>
<dbReference type="InterPro" id="IPR000884">
    <property type="entry name" value="TSP1_rpt"/>
</dbReference>
<dbReference type="InterPro" id="IPR036383">
    <property type="entry name" value="TSP1_rpt_sf"/>
</dbReference>
<dbReference type="PANTHER" id="PTHR13723:SF38">
    <property type="entry name" value="A DISINTEGRIN AND METALLOPROTEINASE WITH THROMBOSPONDIN MOTIFS 4"/>
    <property type="match status" value="1"/>
</dbReference>
<dbReference type="PANTHER" id="PTHR13723">
    <property type="entry name" value="ADAMTS A DISINTEGRIN AND METALLOPROTEASE WITH THROMBOSPONDIN MOTIFS PROTEASE"/>
    <property type="match status" value="1"/>
</dbReference>
<dbReference type="Pfam" id="PF17771">
    <property type="entry name" value="ADAMTS_CR_2"/>
    <property type="match status" value="1"/>
</dbReference>
<dbReference type="Pfam" id="PF19236">
    <property type="entry name" value="ADAMTS_CR_3"/>
    <property type="match status" value="1"/>
</dbReference>
<dbReference type="Pfam" id="PF05986">
    <property type="entry name" value="ADAMTS_spacer1"/>
    <property type="match status" value="1"/>
</dbReference>
<dbReference type="Pfam" id="PF01421">
    <property type="entry name" value="Reprolysin"/>
    <property type="match status" value="1"/>
</dbReference>
<dbReference type="Pfam" id="PF00090">
    <property type="entry name" value="TSP_1"/>
    <property type="match status" value="1"/>
</dbReference>
<dbReference type="PRINTS" id="PR01857">
    <property type="entry name" value="ADAMTSFAMILY"/>
</dbReference>
<dbReference type="SMART" id="SM00608">
    <property type="entry name" value="ACR"/>
    <property type="match status" value="1"/>
</dbReference>
<dbReference type="SMART" id="SM00209">
    <property type="entry name" value="TSP1"/>
    <property type="match status" value="1"/>
</dbReference>
<dbReference type="SUPFAM" id="SSF55486">
    <property type="entry name" value="Metalloproteases ('zincins'), catalytic domain"/>
    <property type="match status" value="1"/>
</dbReference>
<dbReference type="SUPFAM" id="SSF82895">
    <property type="entry name" value="TSP-1 type 1 repeat"/>
    <property type="match status" value="1"/>
</dbReference>
<dbReference type="PROSITE" id="PS50215">
    <property type="entry name" value="ADAM_MEPRO"/>
    <property type="match status" value="1"/>
</dbReference>
<dbReference type="PROSITE" id="PS50092">
    <property type="entry name" value="TSP1"/>
    <property type="match status" value="1"/>
</dbReference>
<dbReference type="PROSITE" id="PS00142">
    <property type="entry name" value="ZINC_PROTEASE"/>
    <property type="match status" value="1"/>
</dbReference>
<protein>
    <recommendedName>
        <fullName>A disintegrin and metalloproteinase with thrombospondin motifs 4</fullName>
        <shortName>ADAM-TS 4</shortName>
        <shortName>ADAM-TS4</shortName>
        <shortName>ADAMTS-4</shortName>
        <ecNumber>3.4.24.82</ecNumber>
    </recommendedName>
    <alternativeName>
        <fullName>Aggrecanase-1</fullName>
    </alternativeName>
</protein>
<keyword id="KW-0165">Cleavage on pair of basic residues</keyword>
<keyword id="KW-1015">Disulfide bond</keyword>
<keyword id="KW-0272">Extracellular matrix</keyword>
<keyword id="KW-0325">Glycoprotein</keyword>
<keyword id="KW-0378">Hydrolase</keyword>
<keyword id="KW-0479">Metal-binding</keyword>
<keyword id="KW-0482">Metalloprotease</keyword>
<keyword id="KW-0645">Protease</keyword>
<keyword id="KW-1185">Reference proteome</keyword>
<keyword id="KW-0964">Secreted</keyword>
<keyword id="KW-0862">Zinc</keyword>
<keyword id="KW-0865">Zymogen</keyword>
<feature type="propeptide" id="PRO_0000029168" evidence="1">
    <location>
        <begin position="1" status="less than"/>
        <end position="5"/>
    </location>
</feature>
<feature type="chain" id="PRO_0000029169" description="A disintegrin and metalloproteinase with thrombospondin motifs 4">
    <location>
        <begin position="6"/>
        <end position="630"/>
    </location>
</feature>
<feature type="domain" description="Peptidase M12B" evidence="5">
    <location>
        <begin position="11"/>
        <end position="221"/>
    </location>
</feature>
<feature type="domain" description="Disintegrin">
    <location>
        <begin position="233"/>
        <end position="303"/>
    </location>
</feature>
<feature type="domain" description="TSP type-1" evidence="4">
    <location>
        <begin position="313"/>
        <end position="368"/>
    </location>
</feature>
<feature type="region of interest" description="Spacer">
    <location>
        <begin position="479"/>
        <end position="630"/>
    </location>
</feature>
<feature type="active site" evidence="5 6">
    <location>
        <position position="155"/>
    </location>
</feature>
<feature type="binding site" evidence="2">
    <location>
        <position position="154"/>
    </location>
    <ligand>
        <name>Zn(2+)</name>
        <dbReference type="ChEBI" id="CHEBI:29105"/>
        <note>catalytic</note>
    </ligand>
</feature>
<feature type="binding site" evidence="2">
    <location>
        <position position="158"/>
    </location>
    <ligand>
        <name>Zn(2+)</name>
        <dbReference type="ChEBI" id="CHEBI:29105"/>
        <note>catalytic</note>
    </ligand>
</feature>
<feature type="binding site" evidence="2">
    <location>
        <position position="164"/>
    </location>
    <ligand>
        <name>Zn(2+)</name>
        <dbReference type="ChEBI" id="CHEBI:29105"/>
        <note>catalytic</note>
    </ligand>
</feature>
<feature type="glycosylation site" description="N-linked (GlcNAc...) asparagine" evidence="3">
    <location>
        <position position="96"/>
    </location>
</feature>
<feature type="glycosylation site" description="N-linked (GlcNAc...) asparagine" evidence="3">
    <location>
        <position position="474"/>
    </location>
</feature>
<feature type="disulfide bond" evidence="2">
    <location>
        <begin position="86"/>
        <end position="138"/>
    </location>
</feature>
<feature type="disulfide bond" evidence="2">
    <location>
        <begin position="115"/>
        <end position="120"/>
    </location>
</feature>
<feature type="disulfide bond" evidence="2">
    <location>
        <begin position="132"/>
        <end position="216"/>
    </location>
</feature>
<feature type="disulfide bond" evidence="2">
    <location>
        <begin position="170"/>
        <end position="200"/>
    </location>
</feature>
<feature type="disulfide bond" evidence="2">
    <location>
        <begin position="242"/>
        <end position="265"/>
    </location>
</feature>
<feature type="disulfide bond" evidence="2">
    <location>
        <begin position="253"/>
        <end position="275"/>
    </location>
</feature>
<feature type="disulfide bond" evidence="2">
    <location>
        <begin position="260"/>
        <end position="294"/>
    </location>
</feature>
<feature type="disulfide bond" evidence="2">
    <location>
        <begin position="288"/>
        <end position="299"/>
    </location>
</feature>
<feature type="disulfide bond" evidence="1">
    <location>
        <begin position="325"/>
        <end position="362"/>
    </location>
</feature>
<feature type="disulfide bond" evidence="1">
    <location>
        <begin position="329"/>
        <end position="367"/>
    </location>
</feature>
<feature type="disulfide bond" evidence="1">
    <location>
        <begin position="340"/>
        <end position="352"/>
    </location>
</feature>
<feature type="non-terminal residue">
    <location>
        <position position="1"/>
    </location>
</feature>
<gene>
    <name type="primary">Adamts4</name>
</gene>
<proteinExistence type="evidence at transcript level"/>